<organism>
    <name type="scientific">Sorangium cellulosum (strain So ce56)</name>
    <name type="common">Polyangium cellulosum (strain So ce56)</name>
    <dbReference type="NCBI Taxonomy" id="448385"/>
    <lineage>
        <taxon>Bacteria</taxon>
        <taxon>Pseudomonadati</taxon>
        <taxon>Myxococcota</taxon>
        <taxon>Polyangia</taxon>
        <taxon>Polyangiales</taxon>
        <taxon>Polyangiaceae</taxon>
        <taxon>Sorangium</taxon>
    </lineage>
</organism>
<evidence type="ECO:0000250" key="1"/>
<evidence type="ECO:0000255" key="2">
    <source>
        <dbReference type="HAMAP-Rule" id="MF_00118"/>
    </source>
</evidence>
<name>EFTU_SORC5</name>
<proteinExistence type="inferred from homology"/>
<accession>A9ETD1</accession>
<feature type="chain" id="PRO_0000337549" description="Elongation factor Tu">
    <location>
        <begin position="1"/>
        <end position="396"/>
    </location>
</feature>
<feature type="domain" description="tr-type G">
    <location>
        <begin position="10"/>
        <end position="206"/>
    </location>
</feature>
<feature type="region of interest" description="G1" evidence="1">
    <location>
        <begin position="19"/>
        <end position="26"/>
    </location>
</feature>
<feature type="region of interest" description="G2" evidence="1">
    <location>
        <begin position="60"/>
        <end position="64"/>
    </location>
</feature>
<feature type="region of interest" description="G3" evidence="1">
    <location>
        <begin position="83"/>
        <end position="86"/>
    </location>
</feature>
<feature type="region of interest" description="G4" evidence="1">
    <location>
        <begin position="138"/>
        <end position="141"/>
    </location>
</feature>
<feature type="region of interest" description="G5" evidence="1">
    <location>
        <begin position="176"/>
        <end position="178"/>
    </location>
</feature>
<feature type="binding site" evidence="2">
    <location>
        <begin position="19"/>
        <end position="26"/>
    </location>
    <ligand>
        <name>GTP</name>
        <dbReference type="ChEBI" id="CHEBI:37565"/>
    </ligand>
</feature>
<feature type="binding site" evidence="2">
    <location>
        <position position="26"/>
    </location>
    <ligand>
        <name>Mg(2+)</name>
        <dbReference type="ChEBI" id="CHEBI:18420"/>
    </ligand>
</feature>
<feature type="binding site" evidence="2">
    <location>
        <begin position="83"/>
        <end position="87"/>
    </location>
    <ligand>
        <name>GTP</name>
        <dbReference type="ChEBI" id="CHEBI:37565"/>
    </ligand>
</feature>
<feature type="binding site" evidence="2">
    <location>
        <begin position="138"/>
        <end position="141"/>
    </location>
    <ligand>
        <name>GTP</name>
        <dbReference type="ChEBI" id="CHEBI:37565"/>
    </ligand>
</feature>
<gene>
    <name evidence="2" type="primary">tuf1</name>
    <name type="synonym">tufA1</name>
    <name type="ordered locus">sce0402</name>
</gene>
<gene>
    <name evidence="2" type="primary">tuf2</name>
    <name type="synonym">tufA2</name>
    <name type="ordered locus">sce0841</name>
</gene>
<dbReference type="EC" id="3.6.5.3" evidence="2"/>
<dbReference type="EMBL" id="AM746676">
    <property type="protein sequence ID" value="CAN90559.1"/>
    <property type="molecule type" value="Genomic_DNA"/>
</dbReference>
<dbReference type="EMBL" id="AM746676">
    <property type="protein sequence ID" value="CAN90998.1"/>
    <property type="molecule type" value="Genomic_DNA"/>
</dbReference>
<dbReference type="SMR" id="A9ETD1"/>
<dbReference type="STRING" id="448385.sce0402"/>
<dbReference type="KEGG" id="scl:sce0402"/>
<dbReference type="KEGG" id="scl:sce0841"/>
<dbReference type="eggNOG" id="COG0050">
    <property type="taxonomic scope" value="Bacteria"/>
</dbReference>
<dbReference type="HOGENOM" id="CLU_007265_0_1_7"/>
<dbReference type="OrthoDB" id="9803139at2"/>
<dbReference type="BioCyc" id="SCEL448385:SCE_RS02115-MONOMER"/>
<dbReference type="BioCyc" id="SCEL448385:SCE_RS04410-MONOMER"/>
<dbReference type="Proteomes" id="UP000002139">
    <property type="component" value="Chromosome"/>
</dbReference>
<dbReference type="GO" id="GO:0005829">
    <property type="term" value="C:cytosol"/>
    <property type="evidence" value="ECO:0007669"/>
    <property type="project" value="TreeGrafter"/>
</dbReference>
<dbReference type="GO" id="GO:0005525">
    <property type="term" value="F:GTP binding"/>
    <property type="evidence" value="ECO:0007669"/>
    <property type="project" value="UniProtKB-UniRule"/>
</dbReference>
<dbReference type="GO" id="GO:0003924">
    <property type="term" value="F:GTPase activity"/>
    <property type="evidence" value="ECO:0007669"/>
    <property type="project" value="InterPro"/>
</dbReference>
<dbReference type="GO" id="GO:0003746">
    <property type="term" value="F:translation elongation factor activity"/>
    <property type="evidence" value="ECO:0007669"/>
    <property type="project" value="UniProtKB-UniRule"/>
</dbReference>
<dbReference type="CDD" id="cd01884">
    <property type="entry name" value="EF_Tu"/>
    <property type="match status" value="1"/>
</dbReference>
<dbReference type="CDD" id="cd03697">
    <property type="entry name" value="EFTU_II"/>
    <property type="match status" value="1"/>
</dbReference>
<dbReference type="CDD" id="cd03707">
    <property type="entry name" value="EFTU_III"/>
    <property type="match status" value="1"/>
</dbReference>
<dbReference type="FunFam" id="2.40.30.10:FF:000001">
    <property type="entry name" value="Elongation factor Tu"/>
    <property type="match status" value="1"/>
</dbReference>
<dbReference type="FunFam" id="3.40.50.300:FF:000003">
    <property type="entry name" value="Elongation factor Tu"/>
    <property type="match status" value="1"/>
</dbReference>
<dbReference type="Gene3D" id="3.40.50.300">
    <property type="entry name" value="P-loop containing nucleotide triphosphate hydrolases"/>
    <property type="match status" value="1"/>
</dbReference>
<dbReference type="Gene3D" id="2.40.30.10">
    <property type="entry name" value="Translation factors"/>
    <property type="match status" value="2"/>
</dbReference>
<dbReference type="HAMAP" id="MF_00118_B">
    <property type="entry name" value="EF_Tu_B"/>
    <property type="match status" value="1"/>
</dbReference>
<dbReference type="InterPro" id="IPR041709">
    <property type="entry name" value="EF-Tu_GTP-bd"/>
</dbReference>
<dbReference type="InterPro" id="IPR050055">
    <property type="entry name" value="EF-Tu_GTPase"/>
</dbReference>
<dbReference type="InterPro" id="IPR004161">
    <property type="entry name" value="EFTu-like_2"/>
</dbReference>
<dbReference type="InterPro" id="IPR033720">
    <property type="entry name" value="EFTU_2"/>
</dbReference>
<dbReference type="InterPro" id="IPR027417">
    <property type="entry name" value="P-loop_NTPase"/>
</dbReference>
<dbReference type="InterPro" id="IPR005225">
    <property type="entry name" value="Small_GTP-bd"/>
</dbReference>
<dbReference type="InterPro" id="IPR000795">
    <property type="entry name" value="T_Tr_GTP-bd_dom"/>
</dbReference>
<dbReference type="InterPro" id="IPR009000">
    <property type="entry name" value="Transl_B-barrel_sf"/>
</dbReference>
<dbReference type="InterPro" id="IPR009001">
    <property type="entry name" value="Transl_elong_EF1A/Init_IF2_C"/>
</dbReference>
<dbReference type="InterPro" id="IPR004541">
    <property type="entry name" value="Transl_elong_EFTu/EF1A_bac/org"/>
</dbReference>
<dbReference type="InterPro" id="IPR004160">
    <property type="entry name" value="Transl_elong_EFTu/EF1A_C"/>
</dbReference>
<dbReference type="NCBIfam" id="TIGR00485">
    <property type="entry name" value="EF-Tu"/>
    <property type="match status" value="1"/>
</dbReference>
<dbReference type="NCBIfam" id="NF000766">
    <property type="entry name" value="PRK00049.1"/>
    <property type="match status" value="1"/>
</dbReference>
<dbReference type="NCBIfam" id="NF009372">
    <property type="entry name" value="PRK12735.1"/>
    <property type="match status" value="1"/>
</dbReference>
<dbReference type="NCBIfam" id="NF009373">
    <property type="entry name" value="PRK12736.1"/>
    <property type="match status" value="1"/>
</dbReference>
<dbReference type="NCBIfam" id="TIGR00231">
    <property type="entry name" value="small_GTP"/>
    <property type="match status" value="1"/>
</dbReference>
<dbReference type="PANTHER" id="PTHR43721:SF22">
    <property type="entry name" value="ELONGATION FACTOR TU, MITOCHONDRIAL"/>
    <property type="match status" value="1"/>
</dbReference>
<dbReference type="PANTHER" id="PTHR43721">
    <property type="entry name" value="ELONGATION FACTOR TU-RELATED"/>
    <property type="match status" value="1"/>
</dbReference>
<dbReference type="Pfam" id="PF00009">
    <property type="entry name" value="GTP_EFTU"/>
    <property type="match status" value="1"/>
</dbReference>
<dbReference type="Pfam" id="PF03144">
    <property type="entry name" value="GTP_EFTU_D2"/>
    <property type="match status" value="1"/>
</dbReference>
<dbReference type="Pfam" id="PF03143">
    <property type="entry name" value="GTP_EFTU_D3"/>
    <property type="match status" value="1"/>
</dbReference>
<dbReference type="PRINTS" id="PR00315">
    <property type="entry name" value="ELONGATNFCT"/>
</dbReference>
<dbReference type="SUPFAM" id="SSF50465">
    <property type="entry name" value="EF-Tu/eEF-1alpha/eIF2-gamma C-terminal domain"/>
    <property type="match status" value="1"/>
</dbReference>
<dbReference type="SUPFAM" id="SSF52540">
    <property type="entry name" value="P-loop containing nucleoside triphosphate hydrolases"/>
    <property type="match status" value="1"/>
</dbReference>
<dbReference type="SUPFAM" id="SSF50447">
    <property type="entry name" value="Translation proteins"/>
    <property type="match status" value="1"/>
</dbReference>
<dbReference type="PROSITE" id="PS51722">
    <property type="entry name" value="G_TR_2"/>
    <property type="match status" value="1"/>
</dbReference>
<reference key="1">
    <citation type="journal article" date="2007" name="Nat. Biotechnol.">
        <title>Complete genome sequence of the myxobacterium Sorangium cellulosum.</title>
        <authorList>
            <person name="Schneiker S."/>
            <person name="Perlova O."/>
            <person name="Kaiser O."/>
            <person name="Gerth K."/>
            <person name="Alici A."/>
            <person name="Altmeyer M.O."/>
            <person name="Bartels D."/>
            <person name="Bekel T."/>
            <person name="Beyer S."/>
            <person name="Bode E."/>
            <person name="Bode H.B."/>
            <person name="Bolten C.J."/>
            <person name="Choudhuri J.V."/>
            <person name="Doss S."/>
            <person name="Elnakady Y.A."/>
            <person name="Frank B."/>
            <person name="Gaigalat L."/>
            <person name="Goesmann A."/>
            <person name="Groeger C."/>
            <person name="Gross F."/>
            <person name="Jelsbak L."/>
            <person name="Jelsbak L."/>
            <person name="Kalinowski J."/>
            <person name="Kegler C."/>
            <person name="Knauber T."/>
            <person name="Konietzny S."/>
            <person name="Kopp M."/>
            <person name="Krause L."/>
            <person name="Krug D."/>
            <person name="Linke B."/>
            <person name="Mahmud T."/>
            <person name="Martinez-Arias R."/>
            <person name="McHardy A.C."/>
            <person name="Merai M."/>
            <person name="Meyer F."/>
            <person name="Mormann S."/>
            <person name="Munoz-Dorado J."/>
            <person name="Perez J."/>
            <person name="Pradella S."/>
            <person name="Rachid S."/>
            <person name="Raddatz G."/>
            <person name="Rosenau F."/>
            <person name="Rueckert C."/>
            <person name="Sasse F."/>
            <person name="Scharfe M."/>
            <person name="Schuster S.C."/>
            <person name="Suen G."/>
            <person name="Treuner-Lange A."/>
            <person name="Velicer G.J."/>
            <person name="Vorholter F.-J."/>
            <person name="Weissman K.J."/>
            <person name="Welch R.D."/>
            <person name="Wenzel S.C."/>
            <person name="Whitworth D.E."/>
            <person name="Wilhelm S."/>
            <person name="Wittmann C."/>
            <person name="Bloecker H."/>
            <person name="Puehler A."/>
            <person name="Mueller R."/>
        </authorList>
    </citation>
    <scope>NUCLEOTIDE SEQUENCE [LARGE SCALE GENOMIC DNA]</scope>
    <source>
        <strain>So ce56</strain>
    </source>
</reference>
<protein>
    <recommendedName>
        <fullName evidence="2">Elongation factor Tu</fullName>
        <shortName evidence="2">EF-Tu</shortName>
        <ecNumber evidence="2">3.6.5.3</ecNumber>
    </recommendedName>
</protein>
<sequence length="396" mass="43374">MAKEKFTRTKPHVNVGTIGHIDHGKTTLTAALVKVQSKRNLAKAISYADIAKGGTVRDETKTVTIAAAHVEYESANRHYAHVDCPGHADYIKNMITGAAQMDGAILVVSSLDSVMPQTREHVLLARQVGLNHIVVFLNKCDAVDDPEMLDLVEMEVRELLSKYKFDGDNAPVVRGASLPALQGDPKWEETIQQLLSALDSYIPEPVRDIDKPFLMAIEDVFSIKGRGTVATGRIERGVIKVGDEVQIIGFKDTKKSVVTGVEMFRKLLDQGQAGDNVGCLLRGVEKEEIERGQVLAKPGSITPHTKFTGEVYVLKKEEGGRHTPFFTNYRPQFYIRTTDVTGTVNLPEGVKMVMPGDNITMTIELIAPVALEEQMRFAIREGGKTVGAGVVTKILA</sequence>
<keyword id="KW-0963">Cytoplasm</keyword>
<keyword id="KW-0251">Elongation factor</keyword>
<keyword id="KW-0342">GTP-binding</keyword>
<keyword id="KW-0378">Hydrolase</keyword>
<keyword id="KW-0460">Magnesium</keyword>
<keyword id="KW-0479">Metal-binding</keyword>
<keyword id="KW-0547">Nucleotide-binding</keyword>
<keyword id="KW-0648">Protein biosynthesis</keyword>
<keyword id="KW-1185">Reference proteome</keyword>
<comment type="function">
    <text evidence="2">GTP hydrolase that promotes the GTP-dependent binding of aminoacyl-tRNA to the A-site of ribosomes during protein biosynthesis.</text>
</comment>
<comment type="catalytic activity">
    <reaction evidence="2">
        <text>GTP + H2O = GDP + phosphate + H(+)</text>
        <dbReference type="Rhea" id="RHEA:19669"/>
        <dbReference type="ChEBI" id="CHEBI:15377"/>
        <dbReference type="ChEBI" id="CHEBI:15378"/>
        <dbReference type="ChEBI" id="CHEBI:37565"/>
        <dbReference type="ChEBI" id="CHEBI:43474"/>
        <dbReference type="ChEBI" id="CHEBI:58189"/>
        <dbReference type="EC" id="3.6.5.3"/>
    </reaction>
    <physiologicalReaction direction="left-to-right" evidence="2">
        <dbReference type="Rhea" id="RHEA:19670"/>
    </physiologicalReaction>
</comment>
<comment type="subunit">
    <text evidence="2">Monomer.</text>
</comment>
<comment type="subcellular location">
    <subcellularLocation>
        <location evidence="2">Cytoplasm</location>
    </subcellularLocation>
</comment>
<comment type="similarity">
    <text evidence="2">Belongs to the TRAFAC class translation factor GTPase superfamily. Classic translation factor GTPase family. EF-Tu/EF-1A subfamily.</text>
</comment>